<reference key="1">
    <citation type="journal article" date="2009" name="Genome Res.">
        <title>Comparative genomics of protoploid Saccharomycetaceae.</title>
        <authorList>
            <consortium name="The Genolevures Consortium"/>
            <person name="Souciet J.-L."/>
            <person name="Dujon B."/>
            <person name="Gaillardin C."/>
            <person name="Johnston M."/>
            <person name="Baret P.V."/>
            <person name="Cliften P."/>
            <person name="Sherman D.J."/>
            <person name="Weissenbach J."/>
            <person name="Westhof E."/>
            <person name="Wincker P."/>
            <person name="Jubin C."/>
            <person name="Poulain J."/>
            <person name="Barbe V."/>
            <person name="Segurens B."/>
            <person name="Artiguenave F."/>
            <person name="Anthouard V."/>
            <person name="Vacherie B."/>
            <person name="Val M.-E."/>
            <person name="Fulton R.S."/>
            <person name="Minx P."/>
            <person name="Wilson R."/>
            <person name="Durrens P."/>
            <person name="Jean G."/>
            <person name="Marck C."/>
            <person name="Martin T."/>
            <person name="Nikolski M."/>
            <person name="Rolland T."/>
            <person name="Seret M.-L."/>
            <person name="Casaregola S."/>
            <person name="Despons L."/>
            <person name="Fairhead C."/>
            <person name="Fischer G."/>
            <person name="Lafontaine I."/>
            <person name="Leh V."/>
            <person name="Lemaire M."/>
            <person name="de Montigny J."/>
            <person name="Neuveglise C."/>
            <person name="Thierry A."/>
            <person name="Blanc-Lenfle I."/>
            <person name="Bleykasten C."/>
            <person name="Diffels J."/>
            <person name="Fritsch E."/>
            <person name="Frangeul L."/>
            <person name="Goeffon A."/>
            <person name="Jauniaux N."/>
            <person name="Kachouri-Lafond R."/>
            <person name="Payen C."/>
            <person name="Potier S."/>
            <person name="Pribylova L."/>
            <person name="Ozanne C."/>
            <person name="Richard G.-F."/>
            <person name="Sacerdot C."/>
            <person name="Straub M.-L."/>
            <person name="Talla E."/>
        </authorList>
    </citation>
    <scope>NUCLEOTIDE SEQUENCE [LARGE SCALE GENOMIC DNA]</scope>
    <source>
        <strain>ATCC 2623 / CBS 732 / BCRC 21506 / NBRC 1130 / NCYC 568 / NRRL Y-229</strain>
    </source>
</reference>
<keyword id="KW-0496">Mitochondrion</keyword>
<keyword id="KW-1185">Reference proteome</keyword>
<proteinExistence type="inferred from homology"/>
<gene>
    <name type="primary">RRG7</name>
    <name type="ordered locus">ZYRO0F12430g</name>
</gene>
<dbReference type="EMBL" id="CU928178">
    <property type="protein sequence ID" value="CAR28808.1"/>
    <property type="molecule type" value="Genomic_DNA"/>
</dbReference>
<dbReference type="RefSeq" id="XP_002497741.1">
    <property type="nucleotide sequence ID" value="XM_002497696.1"/>
</dbReference>
<dbReference type="FunCoup" id="C5DYE7">
    <property type="interactions" value="57"/>
</dbReference>
<dbReference type="GeneID" id="8205507"/>
<dbReference type="KEGG" id="zro:ZYRO0F12430g"/>
<dbReference type="HOGENOM" id="CLU_085105_1_0_1"/>
<dbReference type="InParanoid" id="C5DYE7"/>
<dbReference type="Proteomes" id="UP000008536">
    <property type="component" value="Chromosome F"/>
</dbReference>
<dbReference type="GO" id="GO:0005739">
    <property type="term" value="C:mitochondrion"/>
    <property type="evidence" value="ECO:0007669"/>
    <property type="project" value="UniProtKB-SubCell"/>
</dbReference>
<dbReference type="InterPro" id="IPR018828">
    <property type="entry name" value="RRG7"/>
</dbReference>
<dbReference type="PANTHER" id="PTHR28133">
    <property type="entry name" value="REQUIRED FOR RESPIRATORY GROWTH PROTEIN 7, MITOCHONDRIAL"/>
    <property type="match status" value="1"/>
</dbReference>
<dbReference type="PANTHER" id="PTHR28133:SF1">
    <property type="entry name" value="REQUIRED FOR RESPIRATORY GROWTH PROTEIN 7, MITOCHONDRIAL"/>
    <property type="match status" value="1"/>
</dbReference>
<dbReference type="Pfam" id="PF10356">
    <property type="entry name" value="RRG7"/>
    <property type="match status" value="1"/>
</dbReference>
<accession>C5DYE7</accession>
<comment type="subcellular location">
    <subcellularLocation>
        <location evidence="1">Mitochondrion</location>
    </subcellularLocation>
</comment>
<comment type="similarity">
    <text evidence="2">Belongs to the RRG7 family.</text>
</comment>
<sequence>MSRLKAINGIMLRPIIWKRPSSNDAILQFIRQNQEISQSSVFQGTLYEHTVMRELSGKLSMNQLQKIGGSHDRGVDIRGQWPLDFVFGQVTKVVPLDAVPKRCKIHGTTLKPLRCKIEENDGKLDPLKALVQCKAFSGSKVSPREFRELVGTFASIVPDSQRNRSVILMCSPNLLTKEGLSLINTVKVPLIYLRIEMLQRIGDNYDVDNSGRLLNYYENDYAAALLQGCGIKEWLKLSLYRR</sequence>
<evidence type="ECO:0000250" key="1"/>
<evidence type="ECO:0000305" key="2"/>
<feature type="chain" id="PRO_0000405463" description="Required for respiratory growth protein 7, mitochondrial">
    <location>
        <begin position="1"/>
        <end position="242"/>
    </location>
</feature>
<organism>
    <name type="scientific">Zygosaccharomyces rouxii (strain ATCC 2623 / CBS 732 / NBRC 1130 / NCYC 568 / NRRL Y-229)</name>
    <dbReference type="NCBI Taxonomy" id="559307"/>
    <lineage>
        <taxon>Eukaryota</taxon>
        <taxon>Fungi</taxon>
        <taxon>Dikarya</taxon>
        <taxon>Ascomycota</taxon>
        <taxon>Saccharomycotina</taxon>
        <taxon>Saccharomycetes</taxon>
        <taxon>Saccharomycetales</taxon>
        <taxon>Saccharomycetaceae</taxon>
        <taxon>Zygosaccharomyces</taxon>
    </lineage>
</organism>
<name>RRG7_ZYGRC</name>
<protein>
    <recommendedName>
        <fullName>Required for respiratory growth protein 7, mitochondrial</fullName>
    </recommendedName>
</protein>